<protein>
    <recommendedName>
        <fullName>Uncharacterized protein C17A2.11, mitochondrial</fullName>
    </recommendedName>
</protein>
<accession>O13761</accession>
<feature type="transit peptide" description="Mitochondrion" evidence="1">
    <location>
        <begin position="1"/>
        <end status="unknown"/>
    </location>
</feature>
<feature type="chain" id="PRO_0000304104" description="Uncharacterized protein C17A2.11, mitochondrial">
    <location>
        <begin status="unknown"/>
        <end position="217"/>
    </location>
</feature>
<feature type="transmembrane region" description="Helical" evidence="1">
    <location>
        <begin position="151"/>
        <end position="171"/>
    </location>
</feature>
<feature type="transmembrane region" description="Helical" evidence="1">
    <location>
        <begin position="177"/>
        <end position="197"/>
    </location>
</feature>
<reference key="1">
    <citation type="journal article" date="2002" name="Nature">
        <title>The genome sequence of Schizosaccharomyces pombe.</title>
        <authorList>
            <person name="Wood V."/>
            <person name="Gwilliam R."/>
            <person name="Rajandream M.A."/>
            <person name="Lyne M.H."/>
            <person name="Lyne R."/>
            <person name="Stewart A."/>
            <person name="Sgouros J.G."/>
            <person name="Peat N."/>
            <person name="Hayles J."/>
            <person name="Baker S.G."/>
            <person name="Basham D."/>
            <person name="Bowman S."/>
            <person name="Brooks K."/>
            <person name="Brown D."/>
            <person name="Brown S."/>
            <person name="Chillingworth T."/>
            <person name="Churcher C.M."/>
            <person name="Collins M."/>
            <person name="Connor R."/>
            <person name="Cronin A."/>
            <person name="Davis P."/>
            <person name="Feltwell T."/>
            <person name="Fraser A."/>
            <person name="Gentles S."/>
            <person name="Goble A."/>
            <person name="Hamlin N."/>
            <person name="Harris D.E."/>
            <person name="Hidalgo J."/>
            <person name="Hodgson G."/>
            <person name="Holroyd S."/>
            <person name="Hornsby T."/>
            <person name="Howarth S."/>
            <person name="Huckle E.J."/>
            <person name="Hunt S."/>
            <person name="Jagels K."/>
            <person name="James K.D."/>
            <person name="Jones L."/>
            <person name="Jones M."/>
            <person name="Leather S."/>
            <person name="McDonald S."/>
            <person name="McLean J."/>
            <person name="Mooney P."/>
            <person name="Moule S."/>
            <person name="Mungall K.L."/>
            <person name="Murphy L.D."/>
            <person name="Niblett D."/>
            <person name="Odell C."/>
            <person name="Oliver K."/>
            <person name="O'Neil S."/>
            <person name="Pearson D."/>
            <person name="Quail M.A."/>
            <person name="Rabbinowitsch E."/>
            <person name="Rutherford K.M."/>
            <person name="Rutter S."/>
            <person name="Saunders D."/>
            <person name="Seeger K."/>
            <person name="Sharp S."/>
            <person name="Skelton J."/>
            <person name="Simmonds M.N."/>
            <person name="Squares R."/>
            <person name="Squares S."/>
            <person name="Stevens K."/>
            <person name="Taylor K."/>
            <person name="Taylor R.G."/>
            <person name="Tivey A."/>
            <person name="Walsh S.V."/>
            <person name="Warren T."/>
            <person name="Whitehead S."/>
            <person name="Woodward J.R."/>
            <person name="Volckaert G."/>
            <person name="Aert R."/>
            <person name="Robben J."/>
            <person name="Grymonprez B."/>
            <person name="Weltjens I."/>
            <person name="Vanstreels E."/>
            <person name="Rieger M."/>
            <person name="Schaefer M."/>
            <person name="Mueller-Auer S."/>
            <person name="Gabel C."/>
            <person name="Fuchs M."/>
            <person name="Duesterhoeft A."/>
            <person name="Fritzc C."/>
            <person name="Holzer E."/>
            <person name="Moestl D."/>
            <person name="Hilbert H."/>
            <person name="Borzym K."/>
            <person name="Langer I."/>
            <person name="Beck A."/>
            <person name="Lehrach H."/>
            <person name="Reinhardt R."/>
            <person name="Pohl T.M."/>
            <person name="Eger P."/>
            <person name="Zimmermann W."/>
            <person name="Wedler H."/>
            <person name="Wambutt R."/>
            <person name="Purnelle B."/>
            <person name="Goffeau A."/>
            <person name="Cadieu E."/>
            <person name="Dreano S."/>
            <person name="Gloux S."/>
            <person name="Lelaure V."/>
            <person name="Mottier S."/>
            <person name="Galibert F."/>
            <person name="Aves S.J."/>
            <person name="Xiang Z."/>
            <person name="Hunt C."/>
            <person name="Moore K."/>
            <person name="Hurst S.M."/>
            <person name="Lucas M."/>
            <person name="Rochet M."/>
            <person name="Gaillardin C."/>
            <person name="Tallada V.A."/>
            <person name="Garzon A."/>
            <person name="Thode G."/>
            <person name="Daga R.R."/>
            <person name="Cruzado L."/>
            <person name="Jimenez J."/>
            <person name="Sanchez M."/>
            <person name="del Rey F."/>
            <person name="Benito J."/>
            <person name="Dominguez A."/>
            <person name="Revuelta J.L."/>
            <person name="Moreno S."/>
            <person name="Armstrong J."/>
            <person name="Forsburg S.L."/>
            <person name="Cerutti L."/>
            <person name="Lowe T."/>
            <person name="McCombie W.R."/>
            <person name="Paulsen I."/>
            <person name="Potashkin J."/>
            <person name="Shpakovski G.V."/>
            <person name="Ussery D."/>
            <person name="Barrell B.G."/>
            <person name="Nurse P."/>
        </authorList>
    </citation>
    <scope>NUCLEOTIDE SEQUENCE [LARGE SCALE GENOMIC DNA]</scope>
    <source>
        <strain>972 / ATCC 24843</strain>
    </source>
</reference>
<reference key="2">
    <citation type="journal article" date="2006" name="Nat. Biotechnol.">
        <title>ORFeome cloning and global analysis of protein localization in the fission yeast Schizosaccharomyces pombe.</title>
        <authorList>
            <person name="Matsuyama A."/>
            <person name="Arai R."/>
            <person name="Yashiroda Y."/>
            <person name="Shirai A."/>
            <person name="Kamata A."/>
            <person name="Sekido S."/>
            <person name="Kobayashi Y."/>
            <person name="Hashimoto A."/>
            <person name="Hamamoto M."/>
            <person name="Hiraoka Y."/>
            <person name="Horinouchi S."/>
            <person name="Yoshida M."/>
        </authorList>
    </citation>
    <scope>SUBCELLULAR LOCATION [LARGE SCALE ANALYSIS]</scope>
</reference>
<dbReference type="EMBL" id="CU329670">
    <property type="protein sequence ID" value="CAB16564.2"/>
    <property type="molecule type" value="Genomic_DNA"/>
</dbReference>
<dbReference type="PIR" id="T37812">
    <property type="entry name" value="T37812"/>
</dbReference>
<dbReference type="RefSeq" id="NP_594245.1">
    <property type="nucleotide sequence ID" value="NM_001019668.2"/>
</dbReference>
<dbReference type="BioGRID" id="278593">
    <property type="interactions" value="2"/>
</dbReference>
<dbReference type="PaxDb" id="4896-SPAC17A2.11.1"/>
<dbReference type="EnsemblFungi" id="SPAC17A2.11.1">
    <property type="protein sequence ID" value="SPAC17A2.11.1:pep"/>
    <property type="gene ID" value="SPAC17A2.11"/>
</dbReference>
<dbReference type="KEGG" id="spo:2542117"/>
<dbReference type="PomBase" id="SPAC17A2.11"/>
<dbReference type="VEuPathDB" id="FungiDB:SPAC17A2.11"/>
<dbReference type="HOGENOM" id="CLU_1272917_0_0_1"/>
<dbReference type="InParanoid" id="O13761"/>
<dbReference type="PRO" id="PR:O13761"/>
<dbReference type="Proteomes" id="UP000002485">
    <property type="component" value="Chromosome I"/>
</dbReference>
<dbReference type="GO" id="GO:0031966">
    <property type="term" value="C:mitochondrial membrane"/>
    <property type="evidence" value="ECO:0007669"/>
    <property type="project" value="UniProtKB-SubCell"/>
</dbReference>
<dbReference type="GO" id="GO:0005739">
    <property type="term" value="C:mitochondrion"/>
    <property type="evidence" value="ECO:0007005"/>
    <property type="project" value="PomBase"/>
</dbReference>
<comment type="subcellular location">
    <subcellularLocation>
        <location evidence="2">Mitochondrion membrane</location>
        <topology evidence="2">Multi-pass membrane protein</topology>
    </subcellularLocation>
</comment>
<proteinExistence type="predicted"/>
<sequence>MVCPSPLRECHPFLQRSFFPSFALSHRDIISTRACLNDNSPAFDRRYHWVWEEDRRCLNLGKTLASTIHHKGGNLSLQWQRGNTTTHIATRWDANKLLLARAILKEKRNILQDKTSVNVNVNKLIPIPKKKVLKNRAKSLLSIKSHVHFHLIPFINFFLLYHQIILSHSLFHISHLISFHFLFFSFLSFPLLSFILFPCFSLFLSSNSFSLASPFSS</sequence>
<evidence type="ECO:0000255" key="1"/>
<evidence type="ECO:0000305" key="2"/>
<name>YF2B_SCHPO</name>
<organism>
    <name type="scientific">Schizosaccharomyces pombe (strain 972 / ATCC 24843)</name>
    <name type="common">Fission yeast</name>
    <dbReference type="NCBI Taxonomy" id="284812"/>
    <lineage>
        <taxon>Eukaryota</taxon>
        <taxon>Fungi</taxon>
        <taxon>Dikarya</taxon>
        <taxon>Ascomycota</taxon>
        <taxon>Taphrinomycotina</taxon>
        <taxon>Schizosaccharomycetes</taxon>
        <taxon>Schizosaccharomycetales</taxon>
        <taxon>Schizosaccharomycetaceae</taxon>
        <taxon>Schizosaccharomyces</taxon>
    </lineage>
</organism>
<gene>
    <name type="ORF">SPAC17A2.11</name>
</gene>
<keyword id="KW-0472">Membrane</keyword>
<keyword id="KW-0496">Mitochondrion</keyword>
<keyword id="KW-1185">Reference proteome</keyword>
<keyword id="KW-0809">Transit peptide</keyword>
<keyword id="KW-0812">Transmembrane</keyword>
<keyword id="KW-1133">Transmembrane helix</keyword>